<protein>
    <recommendedName>
        <fullName>Delta-guaiene synthase 2</fullName>
        <ecNumber>4.2.3.87</ecNumber>
        <ecNumber>4.2.3.93</ecNumber>
    </recommendedName>
</protein>
<proteinExistence type="evidence at protein level"/>
<keyword id="KW-0456">Lyase</keyword>
<keyword id="KW-0460">Magnesium</keyword>
<keyword id="KW-0479">Metal-binding</keyword>
<sequence>MSSAKLGSASEDVSRRDANYHPTVWGDFFLTHSSNFLENNDSILEKHEELKQEVRNLLVVETSDLPSKIQLTDEIIRLGVGYHFETEIKAQLEKLHDHQLHLNFDLLTTSVWFRLLRGHGFSIPSDVFKRFKNTKGEFETEDARTLWCLYEATHLRVDGEDILEEAIQFSRKRLEALLPKLSFPLSECVRDALHIPYHRNVQRLAARQYIPQYDAEQTKIESLSLFAKIDFNMLQALHQSELREASRWWKEFDFPSKLPYARDRIAEGYYWMMGAHFEPKFSLSRKFLNRIVGITSLIDDTYDVYGTLEEVTLFTEAVERWDIEAVKDIPKYMQVIYIGMLGIFEDFKDNLINARGKDYCIDYAIEVFKEIVRSYQREAEYFHTGYVPSYDEYMENSIISGGYKMFIILMLIGRGEFELKETLDWASTIPEMVKASSLIARYIDDLQTYKAEEERGETVSAVRCYMREFGVSEEQACKKMREMIEIEWKRLNKTTLEADEISSSVVIPSLNFTRVLEVMYDKGDGYSDSQGVTKDRIAALLRHAIEI</sequence>
<dbReference type="EC" id="4.2.3.87"/>
<dbReference type="EC" id="4.2.3.93"/>
<dbReference type="EMBL" id="GU083698">
    <property type="protein sequence ID" value="ACY38196.1"/>
    <property type="molecule type" value="mRNA"/>
</dbReference>
<dbReference type="SMR" id="D0VMR7"/>
<dbReference type="KEGG" id="ag:ACY38196"/>
<dbReference type="BioCyc" id="MetaCyc:MONOMER-16040"/>
<dbReference type="UniPathway" id="UPA00213"/>
<dbReference type="GO" id="GO:0000287">
    <property type="term" value="F:magnesium ion binding"/>
    <property type="evidence" value="ECO:0007669"/>
    <property type="project" value="InterPro"/>
</dbReference>
<dbReference type="GO" id="GO:0010334">
    <property type="term" value="F:sesquiterpene synthase activity"/>
    <property type="evidence" value="ECO:0000314"/>
    <property type="project" value="UniProtKB"/>
</dbReference>
<dbReference type="GO" id="GO:0016102">
    <property type="term" value="P:diterpenoid biosynthetic process"/>
    <property type="evidence" value="ECO:0007669"/>
    <property type="project" value="InterPro"/>
</dbReference>
<dbReference type="GO" id="GO:0045338">
    <property type="term" value="P:farnesyl diphosphate metabolic process"/>
    <property type="evidence" value="ECO:0000314"/>
    <property type="project" value="UniProtKB"/>
</dbReference>
<dbReference type="GO" id="GO:0009753">
    <property type="term" value="P:response to jasmonic acid"/>
    <property type="evidence" value="ECO:0000314"/>
    <property type="project" value="UniProtKB"/>
</dbReference>
<dbReference type="GO" id="GO:0051762">
    <property type="term" value="P:sesquiterpene biosynthetic process"/>
    <property type="evidence" value="ECO:0000314"/>
    <property type="project" value="UniProtKB"/>
</dbReference>
<dbReference type="CDD" id="cd00684">
    <property type="entry name" value="Terpene_cyclase_plant_C1"/>
    <property type="match status" value="1"/>
</dbReference>
<dbReference type="FunFam" id="1.10.600.10:FF:000007">
    <property type="entry name" value="Isoprene synthase, chloroplastic"/>
    <property type="match status" value="1"/>
</dbReference>
<dbReference type="Gene3D" id="1.10.600.10">
    <property type="entry name" value="Farnesyl Diphosphate Synthase"/>
    <property type="match status" value="1"/>
</dbReference>
<dbReference type="Gene3D" id="1.50.10.130">
    <property type="entry name" value="Terpene synthase, N-terminal domain"/>
    <property type="match status" value="1"/>
</dbReference>
<dbReference type="InterPro" id="IPR008949">
    <property type="entry name" value="Isoprenoid_synthase_dom_sf"/>
</dbReference>
<dbReference type="InterPro" id="IPR034741">
    <property type="entry name" value="Terpene_cyclase-like_1_C"/>
</dbReference>
<dbReference type="InterPro" id="IPR044814">
    <property type="entry name" value="Terpene_cyclase_plant_C1"/>
</dbReference>
<dbReference type="InterPro" id="IPR001906">
    <property type="entry name" value="Terpene_synth_N"/>
</dbReference>
<dbReference type="InterPro" id="IPR036965">
    <property type="entry name" value="Terpene_synth_N_sf"/>
</dbReference>
<dbReference type="InterPro" id="IPR050148">
    <property type="entry name" value="Terpene_synthase-like"/>
</dbReference>
<dbReference type="InterPro" id="IPR005630">
    <property type="entry name" value="Terpene_synthase_metal-bd"/>
</dbReference>
<dbReference type="InterPro" id="IPR008930">
    <property type="entry name" value="Terpenoid_cyclase/PrenylTrfase"/>
</dbReference>
<dbReference type="PANTHER" id="PTHR31225:SF251">
    <property type="entry name" value="(-)-GERMACRENE D SYNTHASE-LIKE ISOFORM X2"/>
    <property type="match status" value="1"/>
</dbReference>
<dbReference type="PANTHER" id="PTHR31225">
    <property type="entry name" value="OS04G0344100 PROTEIN-RELATED"/>
    <property type="match status" value="1"/>
</dbReference>
<dbReference type="Pfam" id="PF01397">
    <property type="entry name" value="Terpene_synth"/>
    <property type="match status" value="1"/>
</dbReference>
<dbReference type="Pfam" id="PF03936">
    <property type="entry name" value="Terpene_synth_C"/>
    <property type="match status" value="1"/>
</dbReference>
<dbReference type="SFLD" id="SFLDS00005">
    <property type="entry name" value="Isoprenoid_Synthase_Type_I"/>
    <property type="match status" value="1"/>
</dbReference>
<dbReference type="SFLD" id="SFLDG01019">
    <property type="entry name" value="Terpene_Cyclase_Like_1_C_Termi"/>
    <property type="match status" value="1"/>
</dbReference>
<dbReference type="SUPFAM" id="SSF48239">
    <property type="entry name" value="Terpenoid cyclases/Protein prenyltransferases"/>
    <property type="match status" value="1"/>
</dbReference>
<dbReference type="SUPFAM" id="SSF48576">
    <property type="entry name" value="Terpenoid synthases"/>
    <property type="match status" value="1"/>
</dbReference>
<evidence type="ECO:0000250" key="1"/>
<evidence type="ECO:0000269" key="2">
    <source>
    </source>
</evidence>
<evidence type="ECO:0000305" key="3"/>
<comment type="function">
    <text evidence="2">Sesquiterpene synthase involved in the biosynthesis of delta-guaiene (53.7%) and alpha-guaiene (44.6%), two structures composed of five- and seven-membered rings. Also produces 1.7% of alpha-humulene.</text>
</comment>
<comment type="catalytic activity">
    <reaction evidence="2">
        <text>(2E,6E)-farnesyl diphosphate = delta-guaiene + diphosphate</text>
        <dbReference type="Rhea" id="RHEA:31831"/>
        <dbReference type="ChEBI" id="CHEBI:33019"/>
        <dbReference type="ChEBI" id="CHEBI:63447"/>
        <dbReference type="ChEBI" id="CHEBI:175763"/>
        <dbReference type="EC" id="4.2.3.93"/>
    </reaction>
</comment>
<comment type="catalytic activity">
    <reaction evidence="2">
        <text>(2E,6E)-farnesyl diphosphate = alpha-guaiene + diphosphate</text>
        <dbReference type="Rhea" id="RHEA:31807"/>
        <dbReference type="ChEBI" id="CHEBI:33019"/>
        <dbReference type="ChEBI" id="CHEBI:63443"/>
        <dbReference type="ChEBI" id="CHEBI:175763"/>
        <dbReference type="EC" id="4.2.3.87"/>
    </reaction>
</comment>
<comment type="cofactor">
    <cofactor evidence="1">
        <name>Mg(2+)</name>
        <dbReference type="ChEBI" id="CHEBI:18420"/>
    </cofactor>
    <text evidence="1">Binds 3 Mg(2+) ions per subunit.</text>
</comment>
<comment type="biophysicochemical properties">
    <kinetics>
        <KM evidence="2">0.51 uM for farnesyl diphosphate</KM>
        <text>kcat is 9.72 x 10(-5) sec(-1) for farnesyl diphosphate.</text>
    </kinetics>
</comment>
<comment type="pathway">
    <text>Secondary metabolite biosynthesis; terpenoid biosynthesis.</text>
</comment>
<comment type="induction">
    <text evidence="2">Up-regulated by methyl jasmonate.</text>
</comment>
<comment type="domain">
    <text evidence="1">The Asp-Asp-Xaa-Xaa-Asp/Glu (DDXXD/E) motif is important for the catalytic activity, presumably through binding to Mg(2+).</text>
</comment>
<comment type="similarity">
    <text evidence="3">Belongs to the terpene synthase family.</text>
</comment>
<reference key="1">
    <citation type="journal article" date="2010" name="Plant Physiol.">
        <title>Characterization of {delta}-Guaiene Synthases from Cultured Cells of Aquilaria, Responsible for the Formation of the Sesquiterpenes in Agarwood.</title>
        <authorList>
            <person name="Kumeta Y."/>
            <person name="Ito M."/>
        </authorList>
    </citation>
    <scope>NUCLEOTIDE SEQUENCE [MRNA]</scope>
    <scope>FUNCTION</scope>
    <scope>CATALYTIC ACTIVITY</scope>
    <scope>BIOPHYSICOCHEMICAL PROPERTIES</scope>
    <scope>INDUCTION BY METHYL JASMONATE</scope>
</reference>
<name>DGUS2_AQUCR</name>
<feature type="chain" id="PRO_0000419796" description="Delta-guaiene synthase 2">
    <location>
        <begin position="1"/>
        <end position="547"/>
    </location>
</feature>
<feature type="short sequence motif" description="DDXXD motif">
    <location>
        <begin position="299"/>
        <end position="303"/>
    </location>
</feature>
<feature type="binding site" evidence="1">
    <location>
        <position position="299"/>
    </location>
    <ligand>
        <name>Mg(2+)</name>
        <dbReference type="ChEBI" id="CHEBI:18420"/>
        <label>1</label>
    </ligand>
</feature>
<feature type="binding site" evidence="1">
    <location>
        <position position="299"/>
    </location>
    <ligand>
        <name>Mg(2+)</name>
        <dbReference type="ChEBI" id="CHEBI:18420"/>
        <label>2</label>
    </ligand>
</feature>
<feature type="binding site" evidence="1">
    <location>
        <position position="303"/>
    </location>
    <ligand>
        <name>Mg(2+)</name>
        <dbReference type="ChEBI" id="CHEBI:18420"/>
        <label>1</label>
    </ligand>
</feature>
<feature type="binding site" evidence="1">
    <location>
        <position position="303"/>
    </location>
    <ligand>
        <name>Mg(2+)</name>
        <dbReference type="ChEBI" id="CHEBI:18420"/>
        <label>2</label>
    </ligand>
</feature>
<feature type="binding site" evidence="1">
    <location>
        <position position="444"/>
    </location>
    <ligand>
        <name>Mg(2+)</name>
        <dbReference type="ChEBI" id="CHEBI:18420"/>
        <label>3</label>
    </ligand>
</feature>
<organism>
    <name type="scientific">Aquilaria crassna</name>
    <name type="common">Eagle wood</name>
    <dbReference type="NCBI Taxonomy" id="223751"/>
    <lineage>
        <taxon>Eukaryota</taxon>
        <taxon>Viridiplantae</taxon>
        <taxon>Streptophyta</taxon>
        <taxon>Embryophyta</taxon>
        <taxon>Tracheophyta</taxon>
        <taxon>Spermatophyta</taxon>
        <taxon>Magnoliopsida</taxon>
        <taxon>eudicotyledons</taxon>
        <taxon>Gunneridae</taxon>
        <taxon>Pentapetalae</taxon>
        <taxon>rosids</taxon>
        <taxon>malvids</taxon>
        <taxon>Malvales</taxon>
        <taxon>Thymelaeaceae</taxon>
        <taxon>Aquilaria</taxon>
    </lineage>
</organism>
<accession>D0VMR7</accession>
<gene>
    <name type="primary">C3</name>
</gene>